<keyword id="KW-0963">Cytoplasm</keyword>
<keyword id="KW-0520">NAD</keyword>
<keyword id="KW-0560">Oxidoreductase</keyword>
<organism>
    <name type="scientific">Mesorhizobium japonicum (strain LMG 29417 / CECT 9101 / MAFF 303099)</name>
    <name type="common">Mesorhizobium loti (strain MAFF 303099)</name>
    <dbReference type="NCBI Taxonomy" id="266835"/>
    <lineage>
        <taxon>Bacteria</taxon>
        <taxon>Pseudomonadati</taxon>
        <taxon>Pseudomonadota</taxon>
        <taxon>Alphaproteobacteria</taxon>
        <taxon>Hyphomicrobiales</taxon>
        <taxon>Phyllobacteriaceae</taxon>
        <taxon>Mesorhizobium</taxon>
    </lineage>
</organism>
<name>LCDH_RHILO</name>
<feature type="chain" id="PRO_0000417904" description="L-carnitine dehydrogenase">
    <location>
        <begin position="1"/>
        <end position="364"/>
    </location>
</feature>
<feature type="region of interest" description="Disordered" evidence="2">
    <location>
        <begin position="336"/>
        <end position="364"/>
    </location>
</feature>
<feature type="compositionally biased region" description="Basic residues" evidence="2">
    <location>
        <begin position="348"/>
        <end position="364"/>
    </location>
</feature>
<feature type="binding site" evidence="1">
    <location>
        <begin position="11"/>
        <end position="16"/>
    </location>
    <ligand>
        <name>NAD(+)</name>
        <dbReference type="ChEBI" id="CHEBI:57540"/>
    </ligand>
</feature>
<gene>
    <name evidence="3" type="ordered locus">mlr5041</name>
</gene>
<protein>
    <recommendedName>
        <fullName evidence="1">L-carnitine dehydrogenase</fullName>
        <shortName evidence="1">CDH</shortName>
        <shortName evidence="1">L-CDH</shortName>
        <ecNumber evidence="1">1.1.1.108</ecNumber>
    </recommendedName>
</protein>
<dbReference type="EC" id="1.1.1.108" evidence="1"/>
<dbReference type="EMBL" id="BA000012">
    <property type="protein sequence ID" value="BAB51558.1"/>
    <property type="molecule type" value="Genomic_DNA"/>
</dbReference>
<dbReference type="RefSeq" id="WP_010912899.1">
    <property type="nucleotide sequence ID" value="NC_002678.2"/>
</dbReference>
<dbReference type="SMR" id="Q98CR3"/>
<dbReference type="KEGG" id="mlo:mlr5041"/>
<dbReference type="eggNOG" id="COG1250">
    <property type="taxonomic scope" value="Bacteria"/>
</dbReference>
<dbReference type="HOGENOM" id="CLU_009834_0_1_5"/>
<dbReference type="UniPathway" id="UPA00117"/>
<dbReference type="Proteomes" id="UP000000552">
    <property type="component" value="Chromosome"/>
</dbReference>
<dbReference type="GO" id="GO:0005737">
    <property type="term" value="C:cytoplasm"/>
    <property type="evidence" value="ECO:0007669"/>
    <property type="project" value="UniProtKB-SubCell"/>
</dbReference>
<dbReference type="GO" id="GO:0047728">
    <property type="term" value="F:carnitine 3-dehydrogenase activity"/>
    <property type="evidence" value="ECO:0007669"/>
    <property type="project" value="UniProtKB-UniRule"/>
</dbReference>
<dbReference type="GO" id="GO:0070403">
    <property type="term" value="F:NAD+ binding"/>
    <property type="evidence" value="ECO:0007669"/>
    <property type="project" value="InterPro"/>
</dbReference>
<dbReference type="GO" id="GO:0009437">
    <property type="term" value="P:carnitine metabolic process"/>
    <property type="evidence" value="ECO:0007669"/>
    <property type="project" value="UniProtKB-UniRule"/>
</dbReference>
<dbReference type="GO" id="GO:0009056">
    <property type="term" value="P:catabolic process"/>
    <property type="evidence" value="ECO:0007669"/>
    <property type="project" value="UniProtKB-ARBA"/>
</dbReference>
<dbReference type="GO" id="GO:0006631">
    <property type="term" value="P:fatty acid metabolic process"/>
    <property type="evidence" value="ECO:0007669"/>
    <property type="project" value="InterPro"/>
</dbReference>
<dbReference type="Gene3D" id="1.10.1040.10">
    <property type="entry name" value="N-(1-d-carboxylethyl)-l-norvaline Dehydrogenase, domain 2"/>
    <property type="match status" value="1"/>
</dbReference>
<dbReference type="Gene3D" id="3.40.50.720">
    <property type="entry name" value="NAD(P)-binding Rossmann-like Domain"/>
    <property type="match status" value="1"/>
</dbReference>
<dbReference type="HAMAP" id="MF_02129">
    <property type="entry name" value="L_carnitine_dehydrog"/>
    <property type="match status" value="1"/>
</dbReference>
<dbReference type="InterPro" id="IPR006176">
    <property type="entry name" value="3-OHacyl-CoA_DH_NAD-bd"/>
</dbReference>
<dbReference type="InterPro" id="IPR006108">
    <property type="entry name" value="3HC_DH_C"/>
</dbReference>
<dbReference type="InterPro" id="IPR008927">
    <property type="entry name" value="6-PGluconate_DH-like_C_sf"/>
</dbReference>
<dbReference type="InterPro" id="IPR013328">
    <property type="entry name" value="6PGD_dom2"/>
</dbReference>
<dbReference type="InterPro" id="IPR026578">
    <property type="entry name" value="L-carnitine_dehydrogenase"/>
</dbReference>
<dbReference type="InterPro" id="IPR036291">
    <property type="entry name" value="NAD(P)-bd_dom_sf"/>
</dbReference>
<dbReference type="NCBIfam" id="NF005716">
    <property type="entry name" value="PRK07531.1"/>
    <property type="match status" value="1"/>
</dbReference>
<dbReference type="PANTHER" id="PTHR48075">
    <property type="entry name" value="3-HYDROXYACYL-COA DEHYDROGENASE FAMILY PROTEIN"/>
    <property type="match status" value="1"/>
</dbReference>
<dbReference type="PANTHER" id="PTHR48075:SF5">
    <property type="entry name" value="3-HYDROXYBUTYRYL-COA DEHYDROGENASE"/>
    <property type="match status" value="1"/>
</dbReference>
<dbReference type="Pfam" id="PF00725">
    <property type="entry name" value="3HCDH"/>
    <property type="match status" value="1"/>
</dbReference>
<dbReference type="Pfam" id="PF02737">
    <property type="entry name" value="3HCDH_N"/>
    <property type="match status" value="1"/>
</dbReference>
<dbReference type="SUPFAM" id="SSF48179">
    <property type="entry name" value="6-phosphogluconate dehydrogenase C-terminal domain-like"/>
    <property type="match status" value="1"/>
</dbReference>
<dbReference type="SUPFAM" id="SSF51735">
    <property type="entry name" value="NAD(P)-binding Rossmann-fold domains"/>
    <property type="match status" value="1"/>
</dbReference>
<proteinExistence type="inferred from homology"/>
<sequence length="364" mass="39788">MSIINKAAAIGGGVIGAGWVARLLLNGIDVSIFDPDPEASRKVSEVMKGARRAYKQMVPGGLPKEGKLTFAKTIAEAVADADFIQESVPERLDLKHRVLAEIDAHAPANAIVGSSTSGIKPTDMQVAMKKHPERLVVGHPFNPVYLLPLVEIVGGDQTFPEAIEVAKEIYASIGMKPVVIRKEIEAFVGDRLLEAAWREALWLIKDGICTVEELDDIMRYGFGLRWAQMGMFQVYRVAGGEAGMRHFMAQFGPCLKWPWTKLMDVPEFNDELVDLIATQSDDQAHGLSIRELEKIRDDNLVAIMDALSKQNKGKGWGAGALHKDYTKQLAKLAAKKPAASTAAEKAKASKPVKKAEKPKKKKKG</sequence>
<comment type="function">
    <text evidence="1">Catalyzes the NAD(+)-dependent oxidation of L-carnitine to 3-dehydrocarnitine.</text>
</comment>
<comment type="catalytic activity">
    <reaction evidence="1">
        <text>carnitine + NAD(+) = 3-dehydrocarnitine + NADH + H(+)</text>
        <dbReference type="Rhea" id="RHEA:19265"/>
        <dbReference type="ChEBI" id="CHEBI:15378"/>
        <dbReference type="ChEBI" id="CHEBI:17126"/>
        <dbReference type="ChEBI" id="CHEBI:57540"/>
        <dbReference type="ChEBI" id="CHEBI:57885"/>
        <dbReference type="ChEBI" id="CHEBI:57945"/>
        <dbReference type="EC" id="1.1.1.108"/>
    </reaction>
</comment>
<comment type="pathway">
    <text evidence="1">Amine and polyamine metabolism; carnitine metabolism.</text>
</comment>
<comment type="subunit">
    <text evidence="1">Homodimer.</text>
</comment>
<comment type="subcellular location">
    <subcellularLocation>
        <location evidence="1">Cytoplasm</location>
    </subcellularLocation>
</comment>
<comment type="similarity">
    <text evidence="1">Belongs to the 3-hydroxyacyl-CoA dehydrogenase family. L-carnitine dehydrogenase subfamily.</text>
</comment>
<evidence type="ECO:0000255" key="1">
    <source>
        <dbReference type="HAMAP-Rule" id="MF_02129"/>
    </source>
</evidence>
<evidence type="ECO:0000256" key="2">
    <source>
        <dbReference type="SAM" id="MobiDB-lite"/>
    </source>
</evidence>
<evidence type="ECO:0000312" key="3">
    <source>
        <dbReference type="EMBL" id="BAB51558.1"/>
    </source>
</evidence>
<accession>Q98CR3</accession>
<reference key="1">
    <citation type="journal article" date="2000" name="DNA Res.">
        <title>Complete genome structure of the nitrogen-fixing symbiotic bacterium Mesorhizobium loti.</title>
        <authorList>
            <person name="Kaneko T."/>
            <person name="Nakamura Y."/>
            <person name="Sato S."/>
            <person name="Asamizu E."/>
            <person name="Kato T."/>
            <person name="Sasamoto S."/>
            <person name="Watanabe A."/>
            <person name="Idesawa K."/>
            <person name="Ishikawa A."/>
            <person name="Kawashima K."/>
            <person name="Kimura T."/>
            <person name="Kishida Y."/>
            <person name="Kiyokawa C."/>
            <person name="Kohara M."/>
            <person name="Matsumoto M."/>
            <person name="Matsuno A."/>
            <person name="Mochizuki Y."/>
            <person name="Nakayama S."/>
            <person name="Nakazaki N."/>
            <person name="Shimpo S."/>
            <person name="Sugimoto M."/>
            <person name="Takeuchi C."/>
            <person name="Yamada M."/>
            <person name="Tabata S."/>
        </authorList>
    </citation>
    <scope>NUCLEOTIDE SEQUENCE [LARGE SCALE GENOMIC DNA]</scope>
    <source>
        <strain>LMG 29417 / CECT 9101 / MAFF 303099</strain>
    </source>
</reference>